<reference key="1">
    <citation type="journal article" date="2003" name="Science">
        <title>A genomic view of the human-Bacteroides thetaiotaomicron symbiosis.</title>
        <authorList>
            <person name="Xu J."/>
            <person name="Bjursell M.K."/>
            <person name="Himrod J."/>
            <person name="Deng S."/>
            <person name="Carmichael L.K."/>
            <person name="Chiang H.C."/>
            <person name="Hooper L.V."/>
            <person name="Gordon J.I."/>
        </authorList>
    </citation>
    <scope>NUCLEOTIDE SEQUENCE [LARGE SCALE GENOMIC DNA]</scope>
    <source>
        <strain>ATCC 29148 / DSM 2079 / JCM 5827 / CCUG 10774 / NCTC 10582 / VPI-5482 / E50</strain>
    </source>
</reference>
<feature type="chain" id="PRO_0000057225" description="Deoxyribose-phosphate aldolase">
    <location>
        <begin position="1"/>
        <end position="238"/>
    </location>
</feature>
<feature type="active site" description="Proton donor/acceptor" evidence="1">
    <location>
        <position position="104"/>
    </location>
</feature>
<feature type="active site" description="Schiff-base intermediate with acetaldehyde" evidence="1">
    <location>
        <position position="168"/>
    </location>
</feature>
<feature type="active site" description="Proton donor/acceptor" evidence="1">
    <location>
        <position position="197"/>
    </location>
</feature>
<dbReference type="EC" id="4.1.2.4" evidence="1"/>
<dbReference type="EMBL" id="AE015928">
    <property type="protein sequence ID" value="AAO79530.1"/>
    <property type="molecule type" value="Genomic_DNA"/>
</dbReference>
<dbReference type="RefSeq" id="NP_813336.1">
    <property type="nucleotide sequence ID" value="NC_004663.1"/>
</dbReference>
<dbReference type="RefSeq" id="WP_008764575.1">
    <property type="nucleotide sequence ID" value="NC_004663.1"/>
</dbReference>
<dbReference type="SMR" id="Q89ZF2"/>
<dbReference type="STRING" id="226186.BT_4425"/>
<dbReference type="PaxDb" id="226186-BT_4425"/>
<dbReference type="EnsemblBacteria" id="AAO79530">
    <property type="protein sequence ID" value="AAO79530"/>
    <property type="gene ID" value="BT_4425"/>
</dbReference>
<dbReference type="GeneID" id="60925601"/>
<dbReference type="KEGG" id="bth:BT_4425"/>
<dbReference type="PATRIC" id="fig|226186.12.peg.4505"/>
<dbReference type="eggNOG" id="COG0274">
    <property type="taxonomic scope" value="Bacteria"/>
</dbReference>
<dbReference type="HOGENOM" id="CLU_053595_0_2_10"/>
<dbReference type="InParanoid" id="Q89ZF2"/>
<dbReference type="OrthoDB" id="9778711at2"/>
<dbReference type="UniPathway" id="UPA00002">
    <property type="reaction ID" value="UER00468"/>
</dbReference>
<dbReference type="Proteomes" id="UP000001414">
    <property type="component" value="Chromosome"/>
</dbReference>
<dbReference type="GO" id="GO:0005737">
    <property type="term" value="C:cytoplasm"/>
    <property type="evidence" value="ECO:0007669"/>
    <property type="project" value="UniProtKB-SubCell"/>
</dbReference>
<dbReference type="GO" id="GO:0004139">
    <property type="term" value="F:deoxyribose-phosphate aldolase activity"/>
    <property type="evidence" value="ECO:0000318"/>
    <property type="project" value="GO_Central"/>
</dbReference>
<dbReference type="GO" id="GO:0006018">
    <property type="term" value="P:2-deoxyribose 1-phosphate catabolic process"/>
    <property type="evidence" value="ECO:0007669"/>
    <property type="project" value="UniProtKB-UniRule"/>
</dbReference>
<dbReference type="GO" id="GO:0016052">
    <property type="term" value="P:carbohydrate catabolic process"/>
    <property type="evidence" value="ECO:0000318"/>
    <property type="project" value="GO_Central"/>
</dbReference>
<dbReference type="GO" id="GO:0009264">
    <property type="term" value="P:deoxyribonucleotide catabolic process"/>
    <property type="evidence" value="ECO:0000318"/>
    <property type="project" value="GO_Central"/>
</dbReference>
<dbReference type="CDD" id="cd00959">
    <property type="entry name" value="DeoC"/>
    <property type="match status" value="1"/>
</dbReference>
<dbReference type="FunFam" id="3.20.20.70:FF:000044">
    <property type="entry name" value="Deoxyribose-phosphate aldolase"/>
    <property type="match status" value="1"/>
</dbReference>
<dbReference type="Gene3D" id="3.20.20.70">
    <property type="entry name" value="Aldolase class I"/>
    <property type="match status" value="1"/>
</dbReference>
<dbReference type="HAMAP" id="MF_00114">
    <property type="entry name" value="DeoC_type1"/>
    <property type="match status" value="1"/>
</dbReference>
<dbReference type="InterPro" id="IPR013785">
    <property type="entry name" value="Aldolase_TIM"/>
</dbReference>
<dbReference type="InterPro" id="IPR011343">
    <property type="entry name" value="DeoC"/>
</dbReference>
<dbReference type="InterPro" id="IPR002915">
    <property type="entry name" value="DeoC/FbaB/LacD_aldolase"/>
</dbReference>
<dbReference type="InterPro" id="IPR028581">
    <property type="entry name" value="DeoC_typeI"/>
</dbReference>
<dbReference type="NCBIfam" id="TIGR00126">
    <property type="entry name" value="deoC"/>
    <property type="match status" value="1"/>
</dbReference>
<dbReference type="PANTHER" id="PTHR10889">
    <property type="entry name" value="DEOXYRIBOSE-PHOSPHATE ALDOLASE"/>
    <property type="match status" value="1"/>
</dbReference>
<dbReference type="PANTHER" id="PTHR10889:SF1">
    <property type="entry name" value="DEOXYRIBOSE-PHOSPHATE ALDOLASE"/>
    <property type="match status" value="1"/>
</dbReference>
<dbReference type="Pfam" id="PF01791">
    <property type="entry name" value="DeoC"/>
    <property type="match status" value="1"/>
</dbReference>
<dbReference type="PIRSF" id="PIRSF001357">
    <property type="entry name" value="DeoC"/>
    <property type="match status" value="1"/>
</dbReference>
<dbReference type="SMART" id="SM01133">
    <property type="entry name" value="DeoC"/>
    <property type="match status" value="1"/>
</dbReference>
<dbReference type="SUPFAM" id="SSF51569">
    <property type="entry name" value="Aldolase"/>
    <property type="match status" value="1"/>
</dbReference>
<protein>
    <recommendedName>
        <fullName evidence="1">Deoxyribose-phosphate aldolase</fullName>
        <shortName evidence="1">DERA</shortName>
        <ecNumber evidence="1">4.1.2.4</ecNumber>
    </recommendedName>
    <alternativeName>
        <fullName evidence="1">2-deoxy-D-ribose 5-phosphate aldolase</fullName>
    </alternativeName>
    <alternativeName>
        <fullName evidence="1">Phosphodeoxyriboaldolase</fullName>
        <shortName evidence="1">Deoxyriboaldolase</shortName>
    </alternativeName>
</protein>
<proteinExistence type="inferred from homology"/>
<organism>
    <name type="scientific">Bacteroides thetaiotaomicron (strain ATCC 29148 / DSM 2079 / JCM 5827 / CCUG 10774 / NCTC 10582 / VPI-5482 / E50)</name>
    <dbReference type="NCBI Taxonomy" id="226186"/>
    <lineage>
        <taxon>Bacteria</taxon>
        <taxon>Pseudomonadati</taxon>
        <taxon>Bacteroidota</taxon>
        <taxon>Bacteroidia</taxon>
        <taxon>Bacteroidales</taxon>
        <taxon>Bacteroidaceae</taxon>
        <taxon>Bacteroides</taxon>
    </lineage>
</organism>
<accession>Q89ZF2</accession>
<comment type="function">
    <text evidence="1">Catalyzes a reversible aldol reaction between acetaldehyde and D-glyceraldehyde 3-phosphate to generate 2-deoxy-D-ribose 5-phosphate.</text>
</comment>
<comment type="catalytic activity">
    <reaction evidence="1">
        <text>2-deoxy-D-ribose 5-phosphate = D-glyceraldehyde 3-phosphate + acetaldehyde</text>
        <dbReference type="Rhea" id="RHEA:12821"/>
        <dbReference type="ChEBI" id="CHEBI:15343"/>
        <dbReference type="ChEBI" id="CHEBI:59776"/>
        <dbReference type="ChEBI" id="CHEBI:62877"/>
        <dbReference type="EC" id="4.1.2.4"/>
    </reaction>
</comment>
<comment type="pathway">
    <text evidence="1">Carbohydrate degradation; 2-deoxy-D-ribose 1-phosphate degradation; D-glyceraldehyde 3-phosphate and acetaldehyde from 2-deoxy-alpha-D-ribose 1-phosphate: step 2/2.</text>
</comment>
<comment type="subcellular location">
    <subcellularLocation>
        <location evidence="1">Cytoplasm</location>
    </subcellularLocation>
</comment>
<comment type="similarity">
    <text evidence="1">Belongs to the DeoC/FbaB aldolase family. DeoC type 1 subfamily.</text>
</comment>
<evidence type="ECO:0000255" key="1">
    <source>
        <dbReference type="HAMAP-Rule" id="MF_00114"/>
    </source>
</evidence>
<keyword id="KW-0963">Cytoplasm</keyword>
<keyword id="KW-0456">Lyase</keyword>
<keyword id="KW-1185">Reference proteome</keyword>
<keyword id="KW-0704">Schiff base</keyword>
<gene>
    <name evidence="1" type="primary">deoC</name>
    <name type="ordered locus">BT_4425</name>
</gene>
<sequence>MEKKNINEVIANLSVEQLAGMIDHTFLKPFGTAENIEKLCAEARQYQFAMVAINPAEVETCVKLLEGSGVRVGAAIGFPLGQNTVECKAFETRDAIAKGATEIDTVINVRALQKGQTDIVKKEIEDMVSICKPAGVICKVILETCYLTDEEKETVCRIAKEAGVDFVKTSTGFGTAGANVHDVALMRRVVGPVIGVKAAGGIRDLDTALALIQVGATRIGTSSGIQIVEAYKELKKGL</sequence>
<name>DEOC_BACTN</name>